<gene>
    <name evidence="1" type="primary">pheS</name>
    <name type="ordered locus">PYRAB13840</name>
    <name type="ORF">PAB2426</name>
</gene>
<feature type="chain" id="PRO_0000126814" description="Phenylalanine--tRNA ligase alpha subunit">
    <location>
        <begin position="1"/>
        <end position="500"/>
    </location>
</feature>
<feature type="binding site" evidence="1">
    <location>
        <position position="343"/>
    </location>
    <ligand>
        <name>L-phenylalanine</name>
        <dbReference type="ChEBI" id="CHEBI:58095"/>
    </ligand>
</feature>
<feature type="binding site" evidence="1">
    <location>
        <begin position="382"/>
        <end position="384"/>
    </location>
    <ligand>
        <name>L-phenylalanine</name>
        <dbReference type="ChEBI" id="CHEBI:58095"/>
    </ligand>
</feature>
<feature type="binding site" evidence="1">
    <location>
        <position position="423"/>
    </location>
    <ligand>
        <name>L-phenylalanine</name>
        <dbReference type="ChEBI" id="CHEBI:58095"/>
    </ligand>
</feature>
<feature type="binding site" evidence="1">
    <location>
        <position position="425"/>
    </location>
    <ligand>
        <name>Mg(2+)</name>
        <dbReference type="ChEBI" id="CHEBI:18420"/>
        <note>shared with beta subunit</note>
    </ligand>
</feature>
<feature type="binding site" evidence="1">
    <location>
        <position position="448"/>
    </location>
    <ligand>
        <name>L-phenylalanine</name>
        <dbReference type="ChEBI" id="CHEBI:58095"/>
    </ligand>
</feature>
<keyword id="KW-0030">Aminoacyl-tRNA synthetase</keyword>
<keyword id="KW-0067">ATP-binding</keyword>
<keyword id="KW-0963">Cytoplasm</keyword>
<keyword id="KW-0436">Ligase</keyword>
<keyword id="KW-0460">Magnesium</keyword>
<keyword id="KW-0479">Metal-binding</keyword>
<keyword id="KW-0547">Nucleotide-binding</keyword>
<keyword id="KW-0648">Protein biosynthesis</keyword>
<proteinExistence type="inferred from homology"/>
<reference key="1">
    <citation type="journal article" date="2003" name="Mol. Microbiol.">
        <title>An integrated analysis of the genome of the hyperthermophilic archaeon Pyrococcus abyssi.</title>
        <authorList>
            <person name="Cohen G.N."/>
            <person name="Barbe V."/>
            <person name="Flament D."/>
            <person name="Galperin M."/>
            <person name="Heilig R."/>
            <person name="Lecompte O."/>
            <person name="Poch O."/>
            <person name="Prieur D."/>
            <person name="Querellou J."/>
            <person name="Ripp R."/>
            <person name="Thierry J.-C."/>
            <person name="Van der Oost J."/>
            <person name="Weissenbach J."/>
            <person name="Zivanovic Y."/>
            <person name="Forterre P."/>
        </authorList>
    </citation>
    <scope>NUCLEOTIDE SEQUENCE [LARGE SCALE GENOMIC DNA]</scope>
    <source>
        <strain>GE5 / Orsay</strain>
    </source>
</reference>
<reference key="2">
    <citation type="journal article" date="2012" name="Curr. Microbiol.">
        <title>Re-annotation of two hyperthermophilic archaea Pyrococcus abyssi GE5 and Pyrococcus furiosus DSM 3638.</title>
        <authorList>
            <person name="Gao J."/>
            <person name="Wang J."/>
        </authorList>
    </citation>
    <scope>GENOME REANNOTATION</scope>
    <source>
        <strain>GE5 / Orsay</strain>
    </source>
</reference>
<organism>
    <name type="scientific">Pyrococcus abyssi (strain GE5 / Orsay)</name>
    <dbReference type="NCBI Taxonomy" id="272844"/>
    <lineage>
        <taxon>Archaea</taxon>
        <taxon>Methanobacteriati</taxon>
        <taxon>Methanobacteriota</taxon>
        <taxon>Thermococci</taxon>
        <taxon>Thermococcales</taxon>
        <taxon>Thermococcaceae</taxon>
        <taxon>Pyrococcus</taxon>
    </lineage>
</organism>
<sequence length="500" mass="57847">MTLGYNEKLVLLTIAKLEKASVEEIVKETRLDQVAVMRAILTLEKEGLIKLHERKEKIIVLTDIGKEYSKIGLPEIRALRVLREKKKAYLDELKDVLREDELKAIVGILRREGLANVRKDEKGLVLEITEKGEKLGERPIDIALKLLSEKGEVSVDEISRIIDVKDLKRRKIAREDERVERTVEITEKGKKLVSKGIELKREVTRLTPELIASGKWREVELKPFNIKAPVKRIYPGKKQPYRVFLDKIRRRLIEMGFIEMTVDSLIETQFWNFDALFQPQNHPAREWTDTYQLKYPEKGYLPDESLVSRVKEAHERGLAGSRGWGYVWSPERAMLLMPRAHATALSARQLAKGIEIPGKYFTIQRVFRPDVLDRTHLIEFNQIDGFVAGEDLTFRHLLGILKRFAIEIAGAKKVKFFPDYYPFTEPSVQLSAYHPELGWVEFGGAGVFREEMTEALGIKVPVIAWGIGIDRLAMFKLGIDDIRYLFSYDLRWLREAKLIW</sequence>
<accession>Q9UYX3</accession>
<accession>G8ZHJ0</accession>
<name>SYFA_PYRAB</name>
<comment type="catalytic activity">
    <reaction evidence="1">
        <text>tRNA(Phe) + L-phenylalanine + ATP = L-phenylalanyl-tRNA(Phe) + AMP + diphosphate + H(+)</text>
        <dbReference type="Rhea" id="RHEA:19413"/>
        <dbReference type="Rhea" id="RHEA-COMP:9668"/>
        <dbReference type="Rhea" id="RHEA-COMP:9699"/>
        <dbReference type="ChEBI" id="CHEBI:15378"/>
        <dbReference type="ChEBI" id="CHEBI:30616"/>
        <dbReference type="ChEBI" id="CHEBI:33019"/>
        <dbReference type="ChEBI" id="CHEBI:58095"/>
        <dbReference type="ChEBI" id="CHEBI:78442"/>
        <dbReference type="ChEBI" id="CHEBI:78531"/>
        <dbReference type="ChEBI" id="CHEBI:456215"/>
        <dbReference type="EC" id="6.1.1.20"/>
    </reaction>
</comment>
<comment type="cofactor">
    <cofactor evidence="1">
        <name>Mg(2+)</name>
        <dbReference type="ChEBI" id="CHEBI:18420"/>
    </cofactor>
    <text evidence="1">Binds 2 magnesium ions per tetramer.</text>
</comment>
<comment type="subunit">
    <text evidence="1">Tetramer of two alpha and two beta subunits.</text>
</comment>
<comment type="subcellular location">
    <subcellularLocation>
        <location evidence="1">Cytoplasm</location>
    </subcellularLocation>
</comment>
<comment type="similarity">
    <text evidence="1">Belongs to the class-II aminoacyl-tRNA synthetase family. Phe-tRNA synthetase alpha subunit type 2 subfamily.</text>
</comment>
<dbReference type="EC" id="6.1.1.20" evidence="1"/>
<dbReference type="EMBL" id="AJ248287">
    <property type="protein sequence ID" value="CAB50289.1"/>
    <property type="molecule type" value="Genomic_DNA"/>
</dbReference>
<dbReference type="EMBL" id="HE613800">
    <property type="protein sequence ID" value="CCE70827.1"/>
    <property type="molecule type" value="Genomic_DNA"/>
</dbReference>
<dbReference type="PIR" id="D75049">
    <property type="entry name" value="D75049"/>
</dbReference>
<dbReference type="RefSeq" id="WP_010868499.1">
    <property type="nucleotide sequence ID" value="NC_000868.1"/>
</dbReference>
<dbReference type="SMR" id="Q9UYX3"/>
<dbReference type="STRING" id="272844.PAB2426"/>
<dbReference type="KEGG" id="pab:PAB2426"/>
<dbReference type="PATRIC" id="fig|272844.11.peg.1471"/>
<dbReference type="eggNOG" id="arCOG00410">
    <property type="taxonomic scope" value="Archaea"/>
</dbReference>
<dbReference type="HOGENOM" id="CLU_025086_2_2_2"/>
<dbReference type="OrthoDB" id="372178at2157"/>
<dbReference type="PhylomeDB" id="Q9UYX3"/>
<dbReference type="Proteomes" id="UP000000810">
    <property type="component" value="Chromosome"/>
</dbReference>
<dbReference type="Proteomes" id="UP000009139">
    <property type="component" value="Chromosome"/>
</dbReference>
<dbReference type="GO" id="GO:0005737">
    <property type="term" value="C:cytoplasm"/>
    <property type="evidence" value="ECO:0007669"/>
    <property type="project" value="UniProtKB-SubCell"/>
</dbReference>
<dbReference type="GO" id="GO:0005524">
    <property type="term" value="F:ATP binding"/>
    <property type="evidence" value="ECO:0007669"/>
    <property type="project" value="UniProtKB-UniRule"/>
</dbReference>
<dbReference type="GO" id="GO:0000287">
    <property type="term" value="F:magnesium ion binding"/>
    <property type="evidence" value="ECO:0007669"/>
    <property type="project" value="UniProtKB-UniRule"/>
</dbReference>
<dbReference type="GO" id="GO:0004826">
    <property type="term" value="F:phenylalanine-tRNA ligase activity"/>
    <property type="evidence" value="ECO:0007669"/>
    <property type="project" value="UniProtKB-UniRule"/>
</dbReference>
<dbReference type="GO" id="GO:0000049">
    <property type="term" value="F:tRNA binding"/>
    <property type="evidence" value="ECO:0007669"/>
    <property type="project" value="InterPro"/>
</dbReference>
<dbReference type="GO" id="GO:0006432">
    <property type="term" value="P:phenylalanyl-tRNA aminoacylation"/>
    <property type="evidence" value="ECO:0007669"/>
    <property type="project" value="UniProtKB-UniRule"/>
</dbReference>
<dbReference type="CDD" id="cd00496">
    <property type="entry name" value="PheRS_alpha_core"/>
    <property type="match status" value="1"/>
</dbReference>
<dbReference type="FunFam" id="3.30.930.10:FF:000095">
    <property type="entry name" value="Phenylalanine--tRNA ligase alpha subunit"/>
    <property type="match status" value="1"/>
</dbReference>
<dbReference type="Gene3D" id="3.30.930.10">
    <property type="entry name" value="Bira Bifunctional Protein, Domain 2"/>
    <property type="match status" value="1"/>
</dbReference>
<dbReference type="Gene3D" id="1.10.10.10">
    <property type="entry name" value="Winged helix-like DNA-binding domain superfamily/Winged helix DNA-binding domain"/>
    <property type="match status" value="1"/>
</dbReference>
<dbReference type="HAMAP" id="MF_00282">
    <property type="entry name" value="Phe_tRNA_synth_alpha2"/>
    <property type="match status" value="1"/>
</dbReference>
<dbReference type="InterPro" id="IPR006195">
    <property type="entry name" value="aa-tRNA-synth_II"/>
</dbReference>
<dbReference type="InterPro" id="IPR045864">
    <property type="entry name" value="aa-tRNA-synth_II/BPL/LPL"/>
</dbReference>
<dbReference type="InterPro" id="IPR004529">
    <property type="entry name" value="Phe-tRNA-synth_IIc_asu"/>
</dbReference>
<dbReference type="InterPro" id="IPR022917">
    <property type="entry name" value="Phe_tRNA_ligase_alpha_bac/arc"/>
</dbReference>
<dbReference type="InterPro" id="IPR002319">
    <property type="entry name" value="Phenylalanyl-tRNA_Synthase"/>
</dbReference>
<dbReference type="InterPro" id="IPR036388">
    <property type="entry name" value="WH-like_DNA-bd_sf"/>
</dbReference>
<dbReference type="InterPro" id="IPR036390">
    <property type="entry name" value="WH_DNA-bd_sf"/>
</dbReference>
<dbReference type="NCBIfam" id="TIGR00468">
    <property type="entry name" value="pheS"/>
    <property type="match status" value="1"/>
</dbReference>
<dbReference type="NCBIfam" id="NF003210">
    <property type="entry name" value="PRK04172.1"/>
    <property type="match status" value="1"/>
</dbReference>
<dbReference type="PANTHER" id="PTHR11538:SF40">
    <property type="entry name" value="PHENYLALANINE--TRNA LIGASE ALPHA SUBUNIT"/>
    <property type="match status" value="1"/>
</dbReference>
<dbReference type="PANTHER" id="PTHR11538">
    <property type="entry name" value="PHENYLALANYL-TRNA SYNTHETASE"/>
    <property type="match status" value="1"/>
</dbReference>
<dbReference type="Pfam" id="PF01409">
    <property type="entry name" value="tRNA-synt_2d"/>
    <property type="match status" value="1"/>
</dbReference>
<dbReference type="SUPFAM" id="SSF55681">
    <property type="entry name" value="Class II aaRS and biotin synthetases"/>
    <property type="match status" value="1"/>
</dbReference>
<dbReference type="SUPFAM" id="SSF46785">
    <property type="entry name" value="Winged helix' DNA-binding domain"/>
    <property type="match status" value="1"/>
</dbReference>
<dbReference type="PROSITE" id="PS50862">
    <property type="entry name" value="AA_TRNA_LIGASE_II"/>
    <property type="match status" value="1"/>
</dbReference>
<protein>
    <recommendedName>
        <fullName evidence="1">Phenylalanine--tRNA ligase alpha subunit</fullName>
        <ecNumber evidence="1">6.1.1.20</ecNumber>
    </recommendedName>
    <alternativeName>
        <fullName evidence="1">Phenylalanyl-tRNA synthetase alpha subunit</fullName>
        <shortName evidence="1">PheRS</shortName>
    </alternativeName>
</protein>
<evidence type="ECO:0000255" key="1">
    <source>
        <dbReference type="HAMAP-Rule" id="MF_00282"/>
    </source>
</evidence>